<keyword id="KW-0150">Chloroplast</keyword>
<keyword id="KW-0240">DNA-directed RNA polymerase</keyword>
<keyword id="KW-0548">Nucleotidyltransferase</keyword>
<keyword id="KW-0934">Plastid</keyword>
<keyword id="KW-0804">Transcription</keyword>
<keyword id="KW-0808">Transferase</keyword>
<protein>
    <recommendedName>
        <fullName evidence="1">DNA-directed RNA polymerase subunit alpha</fullName>
        <shortName evidence="1">PEP</shortName>
        <ecNumber evidence="1">2.7.7.6</ecNumber>
    </recommendedName>
    <alternativeName>
        <fullName evidence="1">Plastid-encoded RNA polymerase subunit alpha</fullName>
        <shortName evidence="1">RNA polymerase subunit alpha</shortName>
    </alternativeName>
</protein>
<comment type="function">
    <text evidence="1">DNA-dependent RNA polymerase catalyzes the transcription of DNA into RNA using the four ribonucleoside triphosphates as substrates.</text>
</comment>
<comment type="catalytic activity">
    <reaction evidence="1">
        <text>RNA(n) + a ribonucleoside 5'-triphosphate = RNA(n+1) + diphosphate</text>
        <dbReference type="Rhea" id="RHEA:21248"/>
        <dbReference type="Rhea" id="RHEA-COMP:14527"/>
        <dbReference type="Rhea" id="RHEA-COMP:17342"/>
        <dbReference type="ChEBI" id="CHEBI:33019"/>
        <dbReference type="ChEBI" id="CHEBI:61557"/>
        <dbReference type="ChEBI" id="CHEBI:140395"/>
        <dbReference type="EC" id="2.7.7.6"/>
    </reaction>
</comment>
<comment type="subunit">
    <text evidence="1">In plastids the minimal PEP RNA polymerase catalytic core is composed of four subunits: alpha, beta, beta', and beta''. When a (nuclear-encoded) sigma factor is associated with the core the holoenzyme is formed, which can initiate transcription.</text>
</comment>
<comment type="subcellular location">
    <subcellularLocation>
        <location>Plastid</location>
        <location>Chloroplast</location>
    </subcellularLocation>
</comment>
<comment type="domain">
    <text evidence="1">The N-terminal domain is essential for RNAP assembly and basal transcription, whereas the C-terminal domain is involved in interaction with transcriptional regulators and with upstream promoter elements.</text>
</comment>
<comment type="similarity">
    <text evidence="1">Belongs to the RNA polymerase alpha chain family.</text>
</comment>
<name>RPOA_AGRST</name>
<gene>
    <name evidence="1" type="primary">rpoA</name>
</gene>
<feature type="chain" id="PRO_0000275683" description="DNA-directed RNA polymerase subunit alpha">
    <location>
        <begin position="1"/>
        <end position="339"/>
    </location>
</feature>
<feature type="region of interest" description="Alpha N-terminal domain (alpha-NTD)" evidence="1">
    <location>
        <begin position="1"/>
        <end position="233"/>
    </location>
</feature>
<feature type="region of interest" description="Alpha C-terminal domain (alpha-CTD)" evidence="1">
    <location>
        <begin position="266"/>
        <end position="339"/>
    </location>
</feature>
<organism>
    <name type="scientific">Agrostis stolonifera</name>
    <name type="common">Creeping bentgrass</name>
    <dbReference type="NCBI Taxonomy" id="63632"/>
    <lineage>
        <taxon>Eukaryota</taxon>
        <taxon>Viridiplantae</taxon>
        <taxon>Streptophyta</taxon>
        <taxon>Embryophyta</taxon>
        <taxon>Tracheophyta</taxon>
        <taxon>Spermatophyta</taxon>
        <taxon>Magnoliopsida</taxon>
        <taxon>Liliopsida</taxon>
        <taxon>Poales</taxon>
        <taxon>Poaceae</taxon>
        <taxon>BOP clade</taxon>
        <taxon>Pooideae</taxon>
        <taxon>Poodae</taxon>
        <taxon>Poeae</taxon>
        <taxon>Poeae Chloroplast Group 1 (Aveneae type)</taxon>
        <taxon>Agrostidodinae</taxon>
        <taxon>Agrostidinae</taxon>
        <taxon>Agrostis</taxon>
    </lineage>
</organism>
<reference key="1">
    <citation type="journal article" date="2007" name="Theor. Appl. Genet.">
        <title>Complete chloroplast genome sequences of Hordeum vulgare, Sorghum bicolor and Agrostis stolonifera, and comparative analyses with other grass genomes.</title>
        <authorList>
            <person name="Saski C."/>
            <person name="Lee S.-B."/>
            <person name="Fjellheim S."/>
            <person name="Guda C."/>
            <person name="Jansen R.K."/>
            <person name="Luo H."/>
            <person name="Tomkins J."/>
            <person name="Rognli O.A."/>
            <person name="Daniell H."/>
            <person name="Clarke J.L."/>
        </authorList>
    </citation>
    <scope>NUCLEOTIDE SEQUENCE [LARGE SCALE GENOMIC DNA]</scope>
    <source>
        <strain>cv. Penn A-4</strain>
    </source>
</reference>
<accession>A1EA40</accession>
<geneLocation type="chloroplast"/>
<proteinExistence type="inferred from homology"/>
<sequence>MVREEVAGSTQTLQWKCVESRVDSKRLYYGRFILSPLRKGQADTVGIALRRALLGEIEGTCITRAKFGSVPHEYSTIAGIEESVQEILLNLKEIVLRSNLYGVRDASICVKGPRYITAQDIILPPSVEIVDTAQPIANLTEPIDFCIELQIKRDRGYQTELRKNYQDGSYPIDAVSMPVRNVNYSIFSCGNGNEKHEILFLEIWTNGSLTPKEALYEASRNLIDLFLPFLHAEEEGTSFEENKNRFTPPLFTFQKRLTNLKKNKKGIPLNCIFIDQLELPSRTYNCLKRANIHTLLDLLSKTEEDLMRIESFRMEDRKQIWDTLEKYLPMDLLKNKLSF</sequence>
<dbReference type="EC" id="2.7.7.6" evidence="1"/>
<dbReference type="EMBL" id="EF115543">
    <property type="protein sequence ID" value="ABK79611.1"/>
    <property type="molecule type" value="Genomic_DNA"/>
</dbReference>
<dbReference type="RefSeq" id="YP_874768.1">
    <property type="nucleotide sequence ID" value="NC_008591.1"/>
</dbReference>
<dbReference type="SMR" id="A1EA40"/>
<dbReference type="GeneID" id="4525013"/>
<dbReference type="GO" id="GO:0009507">
    <property type="term" value="C:chloroplast"/>
    <property type="evidence" value="ECO:0007669"/>
    <property type="project" value="UniProtKB-SubCell"/>
</dbReference>
<dbReference type="GO" id="GO:0000428">
    <property type="term" value="C:DNA-directed RNA polymerase complex"/>
    <property type="evidence" value="ECO:0007669"/>
    <property type="project" value="UniProtKB-KW"/>
</dbReference>
<dbReference type="GO" id="GO:0005739">
    <property type="term" value="C:mitochondrion"/>
    <property type="evidence" value="ECO:0007669"/>
    <property type="project" value="GOC"/>
</dbReference>
<dbReference type="GO" id="GO:0003677">
    <property type="term" value="F:DNA binding"/>
    <property type="evidence" value="ECO:0007669"/>
    <property type="project" value="UniProtKB-UniRule"/>
</dbReference>
<dbReference type="GO" id="GO:0003899">
    <property type="term" value="F:DNA-directed RNA polymerase activity"/>
    <property type="evidence" value="ECO:0007669"/>
    <property type="project" value="UniProtKB-UniRule"/>
</dbReference>
<dbReference type="GO" id="GO:0046983">
    <property type="term" value="F:protein dimerization activity"/>
    <property type="evidence" value="ECO:0007669"/>
    <property type="project" value="InterPro"/>
</dbReference>
<dbReference type="GO" id="GO:0006351">
    <property type="term" value="P:DNA-templated transcription"/>
    <property type="evidence" value="ECO:0007669"/>
    <property type="project" value="UniProtKB-UniRule"/>
</dbReference>
<dbReference type="CDD" id="cd06928">
    <property type="entry name" value="RNAP_alpha_NTD"/>
    <property type="match status" value="1"/>
</dbReference>
<dbReference type="FunFam" id="1.10.150.20:FF:000021">
    <property type="entry name" value="DNA-directed RNA polymerase subunit alpha"/>
    <property type="match status" value="1"/>
</dbReference>
<dbReference type="FunFam" id="2.170.120.12:FF:000001">
    <property type="entry name" value="DNA-directed RNA polymerase subunit alpha"/>
    <property type="match status" value="1"/>
</dbReference>
<dbReference type="Gene3D" id="1.10.150.20">
    <property type="entry name" value="5' to 3' exonuclease, C-terminal subdomain"/>
    <property type="match status" value="1"/>
</dbReference>
<dbReference type="Gene3D" id="2.170.120.12">
    <property type="entry name" value="DNA-directed RNA polymerase, insert domain"/>
    <property type="match status" value="1"/>
</dbReference>
<dbReference type="Gene3D" id="3.30.1360.10">
    <property type="entry name" value="RNA polymerase, RBP11-like subunit"/>
    <property type="match status" value="1"/>
</dbReference>
<dbReference type="HAMAP" id="MF_00059">
    <property type="entry name" value="RNApol_bact_RpoA"/>
    <property type="match status" value="1"/>
</dbReference>
<dbReference type="InterPro" id="IPR011262">
    <property type="entry name" value="DNA-dir_RNA_pol_insert"/>
</dbReference>
<dbReference type="InterPro" id="IPR011263">
    <property type="entry name" value="DNA-dir_RNA_pol_RpoA/D/Rpb3"/>
</dbReference>
<dbReference type="InterPro" id="IPR011773">
    <property type="entry name" value="DNA-dir_RpoA"/>
</dbReference>
<dbReference type="InterPro" id="IPR036603">
    <property type="entry name" value="RBP11-like"/>
</dbReference>
<dbReference type="InterPro" id="IPR011260">
    <property type="entry name" value="RNAP_asu_C"/>
</dbReference>
<dbReference type="InterPro" id="IPR036643">
    <property type="entry name" value="RNApol_insert_sf"/>
</dbReference>
<dbReference type="NCBIfam" id="TIGR02027">
    <property type="entry name" value="rpoA"/>
    <property type="match status" value="1"/>
</dbReference>
<dbReference type="Pfam" id="PF01000">
    <property type="entry name" value="RNA_pol_A_bac"/>
    <property type="match status" value="1"/>
</dbReference>
<dbReference type="Pfam" id="PF03118">
    <property type="entry name" value="RNA_pol_A_CTD"/>
    <property type="match status" value="1"/>
</dbReference>
<dbReference type="Pfam" id="PF01193">
    <property type="entry name" value="RNA_pol_L"/>
    <property type="match status" value="1"/>
</dbReference>
<dbReference type="SMART" id="SM00662">
    <property type="entry name" value="RPOLD"/>
    <property type="match status" value="1"/>
</dbReference>
<dbReference type="SUPFAM" id="SSF47789">
    <property type="entry name" value="C-terminal domain of RNA polymerase alpha subunit"/>
    <property type="match status" value="1"/>
</dbReference>
<dbReference type="SUPFAM" id="SSF56553">
    <property type="entry name" value="Insert subdomain of RNA polymerase alpha subunit"/>
    <property type="match status" value="1"/>
</dbReference>
<dbReference type="SUPFAM" id="SSF55257">
    <property type="entry name" value="RBP11-like subunits of RNA polymerase"/>
    <property type="match status" value="1"/>
</dbReference>
<evidence type="ECO:0000255" key="1">
    <source>
        <dbReference type="HAMAP-Rule" id="MF_00059"/>
    </source>
</evidence>